<accession>Q5WWU5</accession>
<feature type="chain" id="PRO_0000250008" description="Anhydro-N-acetylmuramic acid kinase">
    <location>
        <begin position="1"/>
        <end position="366"/>
    </location>
</feature>
<feature type="binding site" evidence="1">
    <location>
        <begin position="10"/>
        <end position="17"/>
    </location>
    <ligand>
        <name>ATP</name>
        <dbReference type="ChEBI" id="CHEBI:30616"/>
    </ligand>
</feature>
<organism>
    <name type="scientific">Legionella pneumophila (strain Lens)</name>
    <dbReference type="NCBI Taxonomy" id="297245"/>
    <lineage>
        <taxon>Bacteria</taxon>
        <taxon>Pseudomonadati</taxon>
        <taxon>Pseudomonadota</taxon>
        <taxon>Gammaproteobacteria</taxon>
        <taxon>Legionellales</taxon>
        <taxon>Legionellaceae</taxon>
        <taxon>Legionella</taxon>
    </lineage>
</organism>
<gene>
    <name evidence="1" type="primary">anmK</name>
    <name type="ordered locus">lpl1354</name>
</gene>
<protein>
    <recommendedName>
        <fullName evidence="1">Anhydro-N-acetylmuramic acid kinase</fullName>
        <ecNumber evidence="1">2.7.1.170</ecNumber>
    </recommendedName>
    <alternativeName>
        <fullName evidence="1">AnhMurNAc kinase</fullName>
    </alternativeName>
</protein>
<dbReference type="EC" id="2.7.1.170" evidence="1"/>
<dbReference type="EMBL" id="CR628337">
    <property type="protein sequence ID" value="CAH15594.1"/>
    <property type="molecule type" value="Genomic_DNA"/>
</dbReference>
<dbReference type="RefSeq" id="WP_011215419.1">
    <property type="nucleotide sequence ID" value="NC_006369.1"/>
</dbReference>
<dbReference type="SMR" id="Q5WWU5"/>
<dbReference type="KEGG" id="lpf:lpl1354"/>
<dbReference type="LegioList" id="lpl1354"/>
<dbReference type="HOGENOM" id="CLU_038782_0_0_6"/>
<dbReference type="UniPathway" id="UPA00343"/>
<dbReference type="UniPathway" id="UPA00544"/>
<dbReference type="Proteomes" id="UP000002517">
    <property type="component" value="Chromosome"/>
</dbReference>
<dbReference type="GO" id="GO:0005524">
    <property type="term" value="F:ATP binding"/>
    <property type="evidence" value="ECO:0007669"/>
    <property type="project" value="UniProtKB-UniRule"/>
</dbReference>
<dbReference type="GO" id="GO:0016301">
    <property type="term" value="F:kinase activity"/>
    <property type="evidence" value="ECO:0007669"/>
    <property type="project" value="UniProtKB-KW"/>
</dbReference>
<dbReference type="GO" id="GO:0016773">
    <property type="term" value="F:phosphotransferase activity, alcohol group as acceptor"/>
    <property type="evidence" value="ECO:0007669"/>
    <property type="project" value="UniProtKB-UniRule"/>
</dbReference>
<dbReference type="GO" id="GO:0097175">
    <property type="term" value="P:1,6-anhydro-N-acetyl-beta-muramic acid catabolic process"/>
    <property type="evidence" value="ECO:0007669"/>
    <property type="project" value="UniProtKB-UniRule"/>
</dbReference>
<dbReference type="GO" id="GO:0006040">
    <property type="term" value="P:amino sugar metabolic process"/>
    <property type="evidence" value="ECO:0007669"/>
    <property type="project" value="InterPro"/>
</dbReference>
<dbReference type="GO" id="GO:0009254">
    <property type="term" value="P:peptidoglycan turnover"/>
    <property type="evidence" value="ECO:0007669"/>
    <property type="project" value="UniProtKB-UniRule"/>
</dbReference>
<dbReference type="CDD" id="cd24050">
    <property type="entry name" value="ASKHA_NBD_ANMK"/>
    <property type="match status" value="1"/>
</dbReference>
<dbReference type="Gene3D" id="3.30.420.40">
    <property type="match status" value="2"/>
</dbReference>
<dbReference type="HAMAP" id="MF_01270">
    <property type="entry name" value="AnhMurNAc_kinase"/>
    <property type="match status" value="1"/>
</dbReference>
<dbReference type="InterPro" id="IPR005338">
    <property type="entry name" value="Anhydro_N_Ac-Mur_kinase"/>
</dbReference>
<dbReference type="InterPro" id="IPR043129">
    <property type="entry name" value="ATPase_NBD"/>
</dbReference>
<dbReference type="NCBIfam" id="NF007139">
    <property type="entry name" value="PRK09585.1-3"/>
    <property type="match status" value="1"/>
</dbReference>
<dbReference type="PANTHER" id="PTHR30605">
    <property type="entry name" value="ANHYDRO-N-ACETYLMURAMIC ACID KINASE"/>
    <property type="match status" value="1"/>
</dbReference>
<dbReference type="PANTHER" id="PTHR30605:SF0">
    <property type="entry name" value="ANHYDRO-N-ACETYLMURAMIC ACID KINASE"/>
    <property type="match status" value="1"/>
</dbReference>
<dbReference type="Pfam" id="PF03702">
    <property type="entry name" value="AnmK"/>
    <property type="match status" value="1"/>
</dbReference>
<dbReference type="SUPFAM" id="SSF53067">
    <property type="entry name" value="Actin-like ATPase domain"/>
    <property type="match status" value="1"/>
</dbReference>
<proteinExistence type="inferred from homology"/>
<reference key="1">
    <citation type="journal article" date="2004" name="Nat. Genet.">
        <title>Evidence in the Legionella pneumophila genome for exploitation of host cell functions and high genome plasticity.</title>
        <authorList>
            <person name="Cazalet C."/>
            <person name="Rusniok C."/>
            <person name="Brueggemann H."/>
            <person name="Zidane N."/>
            <person name="Magnier A."/>
            <person name="Ma L."/>
            <person name="Tichit M."/>
            <person name="Jarraud S."/>
            <person name="Bouchier C."/>
            <person name="Vandenesch F."/>
            <person name="Kunst F."/>
            <person name="Etienne J."/>
            <person name="Glaser P."/>
            <person name="Buchrieser C."/>
        </authorList>
    </citation>
    <scope>NUCLEOTIDE SEQUENCE [LARGE SCALE GENOMIC DNA]</scope>
    <source>
        <strain>Lens</strain>
    </source>
</reference>
<keyword id="KW-0067">ATP-binding</keyword>
<keyword id="KW-0119">Carbohydrate metabolism</keyword>
<keyword id="KW-0418">Kinase</keyword>
<keyword id="KW-0547">Nucleotide-binding</keyword>
<keyword id="KW-0808">Transferase</keyword>
<evidence type="ECO:0000255" key="1">
    <source>
        <dbReference type="HAMAP-Rule" id="MF_01270"/>
    </source>
</evidence>
<sequence>MSLYIGLMSGTSMDGIDAALLELPSNQLIHGITKQYSDDVRRNLDNLIMGNHLTLASICQLNTLIGREFAEAVRQLLIEIKVHPKEIQAIGSHGQTVCHDTSGSIPYTLQLGCGHTISSLTGITVVADFRTRDLVNGGQGAPFAPLYHQQIFSKVNESVAVVNIGGIANVTFIAKNQMTRGWDIGPGNCLMDAWIYKNKGALFDKSGVWASQGEVIHPLLEYLLQDPFFHLDSPKSIGKEYFSLSWLQKHLKPDYTPADIQATLLALTAHTIAETILNESGEIKQLYLCGGGAHNTHLKENLARLLPGIAVKSIVELGISPDYLEAMMFAWLAAQTINQIPVNLTSITGAKSIAILGAVYPIIKSY</sequence>
<name>ANMK_LEGPL</name>
<comment type="function">
    <text evidence="1">Catalyzes the specific phosphorylation of 1,6-anhydro-N-acetylmuramic acid (anhMurNAc) with the simultaneous cleavage of the 1,6-anhydro ring, generating MurNAc-6-P. Is required for the utilization of anhMurNAc either imported from the medium or derived from its own cell wall murein, and thus plays a role in cell wall recycling.</text>
</comment>
<comment type="catalytic activity">
    <reaction evidence="1">
        <text>1,6-anhydro-N-acetyl-beta-muramate + ATP + H2O = N-acetyl-D-muramate 6-phosphate + ADP + H(+)</text>
        <dbReference type="Rhea" id="RHEA:24952"/>
        <dbReference type="ChEBI" id="CHEBI:15377"/>
        <dbReference type="ChEBI" id="CHEBI:15378"/>
        <dbReference type="ChEBI" id="CHEBI:30616"/>
        <dbReference type="ChEBI" id="CHEBI:58690"/>
        <dbReference type="ChEBI" id="CHEBI:58722"/>
        <dbReference type="ChEBI" id="CHEBI:456216"/>
        <dbReference type="EC" id="2.7.1.170"/>
    </reaction>
</comment>
<comment type="pathway">
    <text evidence="1">Amino-sugar metabolism; 1,6-anhydro-N-acetylmuramate degradation.</text>
</comment>
<comment type="pathway">
    <text evidence="1">Cell wall biogenesis; peptidoglycan recycling.</text>
</comment>
<comment type="similarity">
    <text evidence="1">Belongs to the anhydro-N-acetylmuramic acid kinase family.</text>
</comment>